<evidence type="ECO:0000255" key="1">
    <source>
        <dbReference type="HAMAP-Rule" id="MF_01369"/>
    </source>
</evidence>
<evidence type="ECO:0000305" key="2"/>
<reference key="1">
    <citation type="journal article" date="2009" name="J. Bacteriol.">
        <title>Genome sequence of Azotobacter vinelandii, an obligate aerobe specialized to support diverse anaerobic metabolic processes.</title>
        <authorList>
            <person name="Setubal J.C."/>
            <person name="Dos Santos P."/>
            <person name="Goldman B.S."/>
            <person name="Ertesvaag H."/>
            <person name="Espin G."/>
            <person name="Rubio L.M."/>
            <person name="Valla S."/>
            <person name="Almeida N.F."/>
            <person name="Balasubramanian D."/>
            <person name="Cromes L."/>
            <person name="Curatti L."/>
            <person name="Du Z."/>
            <person name="Godsy E."/>
            <person name="Goodner B."/>
            <person name="Hellner-Burris K."/>
            <person name="Hernandez J.A."/>
            <person name="Houmiel K."/>
            <person name="Imperial J."/>
            <person name="Kennedy C."/>
            <person name="Larson T.J."/>
            <person name="Latreille P."/>
            <person name="Ligon L.S."/>
            <person name="Lu J."/>
            <person name="Maerk M."/>
            <person name="Miller N.M."/>
            <person name="Norton S."/>
            <person name="O'Carroll I.P."/>
            <person name="Paulsen I."/>
            <person name="Raulfs E.C."/>
            <person name="Roemer R."/>
            <person name="Rosser J."/>
            <person name="Segura D."/>
            <person name="Slater S."/>
            <person name="Stricklin S.L."/>
            <person name="Studholme D.J."/>
            <person name="Sun J."/>
            <person name="Viana C.J."/>
            <person name="Wallin E."/>
            <person name="Wang B."/>
            <person name="Wheeler C."/>
            <person name="Zhu H."/>
            <person name="Dean D.R."/>
            <person name="Dixon R."/>
            <person name="Wood D."/>
        </authorList>
    </citation>
    <scope>NUCLEOTIDE SEQUENCE [LARGE SCALE GENOMIC DNA]</scope>
    <source>
        <strain>DJ / ATCC BAA-1303</strain>
    </source>
</reference>
<name>RL23_AZOVD</name>
<keyword id="KW-0687">Ribonucleoprotein</keyword>
<keyword id="KW-0689">Ribosomal protein</keyword>
<keyword id="KW-0694">RNA-binding</keyword>
<keyword id="KW-0699">rRNA-binding</keyword>
<organism>
    <name type="scientific">Azotobacter vinelandii (strain DJ / ATCC BAA-1303)</name>
    <dbReference type="NCBI Taxonomy" id="322710"/>
    <lineage>
        <taxon>Bacteria</taxon>
        <taxon>Pseudomonadati</taxon>
        <taxon>Pseudomonadota</taxon>
        <taxon>Gammaproteobacteria</taxon>
        <taxon>Pseudomonadales</taxon>
        <taxon>Pseudomonadaceae</taxon>
        <taxon>Azotobacter</taxon>
    </lineage>
</organism>
<proteinExistence type="inferred from homology"/>
<accession>C1DKL5</accession>
<sequence length="99" mass="10990">MNQERVFKVLLGPHISEKATVLAESKKQFVFKVATDATKLEIKKAVEALFDVKVANVTTLNVQGKTKRTVRGLGKRNDWKKAYVALQPGQDLDFASSAE</sequence>
<feature type="chain" id="PRO_1000215024" description="Large ribosomal subunit protein uL23">
    <location>
        <begin position="1"/>
        <end position="99"/>
    </location>
</feature>
<protein>
    <recommendedName>
        <fullName evidence="1">Large ribosomal subunit protein uL23</fullName>
    </recommendedName>
    <alternativeName>
        <fullName evidence="2">50S ribosomal protein L23</fullName>
    </alternativeName>
</protein>
<comment type="function">
    <text evidence="1">One of the early assembly proteins it binds 23S rRNA. One of the proteins that surrounds the polypeptide exit tunnel on the outside of the ribosome. Forms the main docking site for trigger factor binding to the ribosome.</text>
</comment>
<comment type="subunit">
    <text evidence="1">Part of the 50S ribosomal subunit. Contacts protein L29, and trigger factor when it is bound to the ribosome.</text>
</comment>
<comment type="similarity">
    <text evidence="1">Belongs to the universal ribosomal protein uL23 family.</text>
</comment>
<gene>
    <name evidence="1" type="primary">rplW</name>
    <name type="ordered locus">Avin_06270</name>
</gene>
<dbReference type="EMBL" id="CP001157">
    <property type="protein sequence ID" value="ACO76878.1"/>
    <property type="molecule type" value="Genomic_DNA"/>
</dbReference>
<dbReference type="RefSeq" id="WP_012699304.1">
    <property type="nucleotide sequence ID" value="NC_012560.1"/>
</dbReference>
<dbReference type="SMR" id="C1DKL5"/>
<dbReference type="STRING" id="322710.Avin_06270"/>
<dbReference type="EnsemblBacteria" id="ACO76878">
    <property type="protein sequence ID" value="ACO76878"/>
    <property type="gene ID" value="Avin_06270"/>
</dbReference>
<dbReference type="GeneID" id="88184038"/>
<dbReference type="KEGG" id="avn:Avin_06270"/>
<dbReference type="eggNOG" id="COG0089">
    <property type="taxonomic scope" value="Bacteria"/>
</dbReference>
<dbReference type="HOGENOM" id="CLU_037562_3_1_6"/>
<dbReference type="OrthoDB" id="9793353at2"/>
<dbReference type="Proteomes" id="UP000002424">
    <property type="component" value="Chromosome"/>
</dbReference>
<dbReference type="GO" id="GO:1990904">
    <property type="term" value="C:ribonucleoprotein complex"/>
    <property type="evidence" value="ECO:0007669"/>
    <property type="project" value="UniProtKB-KW"/>
</dbReference>
<dbReference type="GO" id="GO:0005840">
    <property type="term" value="C:ribosome"/>
    <property type="evidence" value="ECO:0007669"/>
    <property type="project" value="UniProtKB-KW"/>
</dbReference>
<dbReference type="GO" id="GO:0019843">
    <property type="term" value="F:rRNA binding"/>
    <property type="evidence" value="ECO:0007669"/>
    <property type="project" value="UniProtKB-UniRule"/>
</dbReference>
<dbReference type="GO" id="GO:0003735">
    <property type="term" value="F:structural constituent of ribosome"/>
    <property type="evidence" value="ECO:0007669"/>
    <property type="project" value="InterPro"/>
</dbReference>
<dbReference type="GO" id="GO:0006412">
    <property type="term" value="P:translation"/>
    <property type="evidence" value="ECO:0007669"/>
    <property type="project" value="UniProtKB-UniRule"/>
</dbReference>
<dbReference type="FunFam" id="3.30.70.330:FF:000001">
    <property type="entry name" value="50S ribosomal protein L23"/>
    <property type="match status" value="1"/>
</dbReference>
<dbReference type="Gene3D" id="3.30.70.330">
    <property type="match status" value="1"/>
</dbReference>
<dbReference type="HAMAP" id="MF_01369_B">
    <property type="entry name" value="Ribosomal_uL23_B"/>
    <property type="match status" value="1"/>
</dbReference>
<dbReference type="InterPro" id="IPR012677">
    <property type="entry name" value="Nucleotide-bd_a/b_plait_sf"/>
</dbReference>
<dbReference type="InterPro" id="IPR013025">
    <property type="entry name" value="Ribosomal_uL23-like"/>
</dbReference>
<dbReference type="InterPro" id="IPR012678">
    <property type="entry name" value="Ribosomal_uL23/eL15/eS24_sf"/>
</dbReference>
<dbReference type="NCBIfam" id="NF004359">
    <property type="entry name" value="PRK05738.1-3"/>
    <property type="match status" value="1"/>
</dbReference>
<dbReference type="NCBIfam" id="NF004363">
    <property type="entry name" value="PRK05738.2-4"/>
    <property type="match status" value="1"/>
</dbReference>
<dbReference type="PANTHER" id="PTHR11620">
    <property type="entry name" value="60S RIBOSOMAL PROTEIN L23A"/>
    <property type="match status" value="1"/>
</dbReference>
<dbReference type="Pfam" id="PF00276">
    <property type="entry name" value="Ribosomal_L23"/>
    <property type="match status" value="1"/>
</dbReference>
<dbReference type="SUPFAM" id="SSF54189">
    <property type="entry name" value="Ribosomal proteins S24e, L23 and L15e"/>
    <property type="match status" value="1"/>
</dbReference>